<sequence length="250" mass="27449">MSHLTTCLVFFLLAFVTYTNASGVFEVHNNCPYTVWAAATPIGGGRRLERGQSWWFWAPPGTKMARIWGRTNCNFDGAGRGWCQTGDCGGVLECKGWGKPPNTLAEYALNQFSNLDFWDISVIDGFNIPMSFGPTNPGPGKCHPIQCVANINGECPGSLRVPGGCNNPCTTFGGQQYCCTQGPCGPTDLSRFFKQRCPDAYSYPQDDPTSTFTCQSWTTDYKVMFCPYGSTHNETTNFPLEMPTSTLEVA</sequence>
<proteinExistence type="evidence at transcript level"/>
<reference key="1">
    <citation type="journal article" date="1995" name="Plant Mol. Biol.">
        <title>Expression of three osmotin-like protein genes in response to osmotic stress and fungal infection in potato.</title>
        <authorList>
            <person name="Zhu B."/>
            <person name="Chen T.H.H."/>
            <person name="Li P.H."/>
        </authorList>
    </citation>
    <scope>NUCLEOTIDE SEQUENCE [MRNA]</scope>
</reference>
<dbReference type="EMBL" id="X67244">
    <property type="protein sequence ID" value="CAA47669.1"/>
    <property type="molecule type" value="mRNA"/>
</dbReference>
<dbReference type="PIR" id="S56708">
    <property type="entry name" value="S25114"/>
</dbReference>
<dbReference type="SMR" id="P50703"/>
<dbReference type="PhylomeDB" id="P50703"/>
<dbReference type="CDD" id="cd09217">
    <property type="entry name" value="TLP-P"/>
    <property type="match status" value="1"/>
</dbReference>
<dbReference type="FunFam" id="2.60.110.10:FF:000003">
    <property type="entry name" value="Thaumatin I"/>
    <property type="match status" value="1"/>
</dbReference>
<dbReference type="Gene3D" id="2.60.110.10">
    <property type="entry name" value="Thaumatin"/>
    <property type="match status" value="1"/>
</dbReference>
<dbReference type="InterPro" id="IPR037176">
    <property type="entry name" value="Osmotin/thaumatin-like_sf"/>
</dbReference>
<dbReference type="InterPro" id="IPR001938">
    <property type="entry name" value="Thaumatin"/>
</dbReference>
<dbReference type="InterPro" id="IPR017949">
    <property type="entry name" value="Thaumatin_CS"/>
</dbReference>
<dbReference type="PANTHER" id="PTHR31048">
    <property type="entry name" value="OS03G0233200 PROTEIN"/>
    <property type="match status" value="1"/>
</dbReference>
<dbReference type="Pfam" id="PF00314">
    <property type="entry name" value="Thaumatin"/>
    <property type="match status" value="1"/>
</dbReference>
<dbReference type="PIRSF" id="PIRSF002703">
    <property type="entry name" value="Thaumatin"/>
    <property type="match status" value="1"/>
</dbReference>
<dbReference type="PRINTS" id="PR00347">
    <property type="entry name" value="THAUMATIN"/>
</dbReference>
<dbReference type="SMART" id="SM00205">
    <property type="entry name" value="THN"/>
    <property type="match status" value="1"/>
</dbReference>
<dbReference type="SUPFAM" id="SSF49870">
    <property type="entry name" value="Osmotin, thaumatin-like protein"/>
    <property type="match status" value="1"/>
</dbReference>
<dbReference type="PROSITE" id="PS00316">
    <property type="entry name" value="THAUMATIN_1"/>
    <property type="match status" value="1"/>
</dbReference>
<dbReference type="PROSITE" id="PS51367">
    <property type="entry name" value="THAUMATIN_2"/>
    <property type="match status" value="1"/>
</dbReference>
<organism>
    <name type="scientific">Solanum commersonii</name>
    <name type="common">Commerson's wild potato</name>
    <name type="synonym">Commerson's nightshade</name>
    <dbReference type="NCBI Taxonomy" id="4109"/>
    <lineage>
        <taxon>Eukaryota</taxon>
        <taxon>Viridiplantae</taxon>
        <taxon>Streptophyta</taxon>
        <taxon>Embryophyta</taxon>
        <taxon>Tracheophyta</taxon>
        <taxon>Spermatophyta</taxon>
        <taxon>Magnoliopsida</taxon>
        <taxon>eudicotyledons</taxon>
        <taxon>Gunneridae</taxon>
        <taxon>Pentapetalae</taxon>
        <taxon>asterids</taxon>
        <taxon>lamiids</taxon>
        <taxon>Solanales</taxon>
        <taxon>Solanaceae</taxon>
        <taxon>Solanoideae</taxon>
        <taxon>Solaneae</taxon>
        <taxon>Solanum</taxon>
    </lineage>
</organism>
<feature type="signal peptide" evidence="1">
    <location>
        <begin position="1"/>
        <end position="21"/>
    </location>
</feature>
<feature type="chain" id="PRO_0000034040" description="Osmotin-like protein OSML15">
    <location>
        <begin position="22"/>
        <end position="250"/>
    </location>
</feature>
<feature type="disulfide bond" evidence="2">
    <location>
        <begin position="31"/>
        <end position="226"/>
    </location>
</feature>
<feature type="disulfide bond" evidence="2">
    <location>
        <begin position="73"/>
        <end position="83"/>
    </location>
</feature>
<feature type="disulfide bond" evidence="2">
    <location>
        <begin position="88"/>
        <end position="94"/>
    </location>
</feature>
<feature type="disulfide bond" evidence="2">
    <location>
        <begin position="142"/>
        <end position="214"/>
    </location>
</feature>
<feature type="disulfide bond" evidence="2">
    <location>
        <begin position="147"/>
        <end position="197"/>
    </location>
</feature>
<feature type="disulfide bond" evidence="2">
    <location>
        <begin position="155"/>
        <end position="165"/>
    </location>
</feature>
<feature type="disulfide bond" evidence="2">
    <location>
        <begin position="169"/>
        <end position="178"/>
    </location>
</feature>
<feature type="disulfide bond" evidence="2">
    <location>
        <begin position="179"/>
        <end position="184"/>
    </location>
</feature>
<evidence type="ECO:0000255" key="1"/>
<evidence type="ECO:0000255" key="2">
    <source>
        <dbReference type="PROSITE-ProRule" id="PRU00699"/>
    </source>
</evidence>
<comment type="induction">
    <text>By abscisic acid (ABA), salt, salicylic acid, wounding, and fungal infection.</text>
</comment>
<comment type="similarity">
    <text evidence="2">Belongs to the thaumatin family.</text>
</comment>
<accession>P50703</accession>
<protein>
    <recommendedName>
        <fullName>Osmotin-like protein OSML15</fullName>
    </recommendedName>
    <alternativeName>
        <fullName>PA15</fullName>
    </alternativeName>
</protein>
<name>OS35_SOLCO</name>
<keyword id="KW-1015">Disulfide bond</keyword>
<keyword id="KW-0732">Signal</keyword>
<keyword id="KW-0346">Stress response</keyword>